<proteinExistence type="inferred from homology"/>
<accession>B2I0K2</accession>
<name>MRAY_ACIBC</name>
<sequence length="372" mass="40915">MLLWLFEQLAGYHSSFQVVRYLTLRSLLSVLTSLTIGLVLGPIMIRKLQALKYGQAVSSFAPENHAKKMGTPTMGGILILLSIGISTLLWADLSNPYVWIVLGVMVVFGAVGWADDWIKIRYKDNAGLPARKKFFWTSVASLGAGIALYLIATQQSNAEYTANMLDLLIPFFKNLSIPLSIVPLGLAFIVFTYLVINGASNAVNLTDGLDGLAIMPVVMVATGLGVFAYLSGDIRFANYLHIPYVKYTSELVVICSAMIGAGLAFLWYNAHPAQVFMGDVGALALGAMLGTIAVMVRQEIVFAIMGGVFVMEAVSVFLQIGSLRMRNKRVFLMAPLHHHYEKQGWKETQVVIRFWIITIMLVVLGLMTLKLR</sequence>
<reference key="1">
    <citation type="journal article" date="2008" name="Antimicrob. Agents Chemother.">
        <title>Whole-genome pyrosequencing of an epidemic multidrug-resistant Acinetobacter baumannii strain belonging to the European clone II group.</title>
        <authorList>
            <person name="Iacono M."/>
            <person name="Villa L."/>
            <person name="Fortini D."/>
            <person name="Bordoni R."/>
            <person name="Imperi F."/>
            <person name="Bonnal R.J."/>
            <person name="Sicheritz-Ponten T."/>
            <person name="De Bellis G."/>
            <person name="Visca P."/>
            <person name="Cassone A."/>
            <person name="Carattoli A."/>
        </authorList>
    </citation>
    <scope>NUCLEOTIDE SEQUENCE [LARGE SCALE GENOMIC DNA]</scope>
    <source>
        <strain>ACICU</strain>
    </source>
</reference>
<keyword id="KW-0131">Cell cycle</keyword>
<keyword id="KW-0132">Cell division</keyword>
<keyword id="KW-0997">Cell inner membrane</keyword>
<keyword id="KW-1003">Cell membrane</keyword>
<keyword id="KW-0133">Cell shape</keyword>
<keyword id="KW-0961">Cell wall biogenesis/degradation</keyword>
<keyword id="KW-0460">Magnesium</keyword>
<keyword id="KW-0472">Membrane</keyword>
<keyword id="KW-0479">Metal-binding</keyword>
<keyword id="KW-0573">Peptidoglycan synthesis</keyword>
<keyword id="KW-0808">Transferase</keyword>
<keyword id="KW-0812">Transmembrane</keyword>
<keyword id="KW-1133">Transmembrane helix</keyword>
<gene>
    <name evidence="1" type="primary">mraY</name>
    <name type="ordered locus">ACICU_03398</name>
</gene>
<evidence type="ECO:0000255" key="1">
    <source>
        <dbReference type="HAMAP-Rule" id="MF_00038"/>
    </source>
</evidence>
<dbReference type="EC" id="2.7.8.13" evidence="1"/>
<dbReference type="EMBL" id="CP000863">
    <property type="protein sequence ID" value="ACC58708.1"/>
    <property type="molecule type" value="Genomic_DNA"/>
</dbReference>
<dbReference type="RefSeq" id="WP_000928089.1">
    <property type="nucleotide sequence ID" value="NZ_CP031380.1"/>
</dbReference>
<dbReference type="SMR" id="B2I0K2"/>
<dbReference type="GeneID" id="92895435"/>
<dbReference type="KEGG" id="abc:ACICU_03398"/>
<dbReference type="HOGENOM" id="CLU_023982_0_0_6"/>
<dbReference type="UniPathway" id="UPA00219"/>
<dbReference type="Proteomes" id="UP000008839">
    <property type="component" value="Chromosome"/>
</dbReference>
<dbReference type="GO" id="GO:0005886">
    <property type="term" value="C:plasma membrane"/>
    <property type="evidence" value="ECO:0007669"/>
    <property type="project" value="UniProtKB-SubCell"/>
</dbReference>
<dbReference type="GO" id="GO:0046872">
    <property type="term" value="F:metal ion binding"/>
    <property type="evidence" value="ECO:0007669"/>
    <property type="project" value="UniProtKB-KW"/>
</dbReference>
<dbReference type="GO" id="GO:0008963">
    <property type="term" value="F:phospho-N-acetylmuramoyl-pentapeptide-transferase activity"/>
    <property type="evidence" value="ECO:0007669"/>
    <property type="project" value="UniProtKB-UniRule"/>
</dbReference>
<dbReference type="GO" id="GO:0051992">
    <property type="term" value="F:UDP-N-acetylmuramoyl-L-alanyl-D-glutamyl-meso-2,6-diaminopimelyl-D-alanyl-D-alanine:undecaprenyl-phosphate transferase activity"/>
    <property type="evidence" value="ECO:0007669"/>
    <property type="project" value="RHEA"/>
</dbReference>
<dbReference type="GO" id="GO:0051301">
    <property type="term" value="P:cell division"/>
    <property type="evidence" value="ECO:0007669"/>
    <property type="project" value="UniProtKB-KW"/>
</dbReference>
<dbReference type="GO" id="GO:0071555">
    <property type="term" value="P:cell wall organization"/>
    <property type="evidence" value="ECO:0007669"/>
    <property type="project" value="UniProtKB-KW"/>
</dbReference>
<dbReference type="GO" id="GO:0009252">
    <property type="term" value="P:peptidoglycan biosynthetic process"/>
    <property type="evidence" value="ECO:0007669"/>
    <property type="project" value="UniProtKB-UniRule"/>
</dbReference>
<dbReference type="GO" id="GO:0008360">
    <property type="term" value="P:regulation of cell shape"/>
    <property type="evidence" value="ECO:0007669"/>
    <property type="project" value="UniProtKB-KW"/>
</dbReference>
<dbReference type="CDD" id="cd06852">
    <property type="entry name" value="GT_MraY"/>
    <property type="match status" value="1"/>
</dbReference>
<dbReference type="HAMAP" id="MF_00038">
    <property type="entry name" value="MraY"/>
    <property type="match status" value="1"/>
</dbReference>
<dbReference type="InterPro" id="IPR000715">
    <property type="entry name" value="Glycosyl_transferase_4"/>
</dbReference>
<dbReference type="InterPro" id="IPR003524">
    <property type="entry name" value="PNAcMuramoyl-5peptid_Trfase"/>
</dbReference>
<dbReference type="InterPro" id="IPR018480">
    <property type="entry name" value="PNAcMuramoyl-5peptid_Trfase_CS"/>
</dbReference>
<dbReference type="NCBIfam" id="TIGR00445">
    <property type="entry name" value="mraY"/>
    <property type="match status" value="1"/>
</dbReference>
<dbReference type="PANTHER" id="PTHR22926">
    <property type="entry name" value="PHOSPHO-N-ACETYLMURAMOYL-PENTAPEPTIDE-TRANSFERASE"/>
    <property type="match status" value="1"/>
</dbReference>
<dbReference type="PANTHER" id="PTHR22926:SF5">
    <property type="entry name" value="PHOSPHO-N-ACETYLMURAMOYL-PENTAPEPTIDE-TRANSFERASE HOMOLOG"/>
    <property type="match status" value="1"/>
</dbReference>
<dbReference type="Pfam" id="PF00953">
    <property type="entry name" value="Glycos_transf_4"/>
    <property type="match status" value="1"/>
</dbReference>
<dbReference type="PROSITE" id="PS01347">
    <property type="entry name" value="MRAY_1"/>
    <property type="match status" value="1"/>
</dbReference>
<dbReference type="PROSITE" id="PS01348">
    <property type="entry name" value="MRAY_2"/>
    <property type="match status" value="1"/>
</dbReference>
<comment type="function">
    <text evidence="1">Catalyzes the initial step of the lipid cycle reactions in the biosynthesis of the cell wall peptidoglycan: transfers peptidoglycan precursor phospho-MurNAc-pentapeptide from UDP-MurNAc-pentapeptide onto the lipid carrier undecaprenyl phosphate, yielding undecaprenyl-pyrophosphoryl-MurNAc-pentapeptide, known as lipid I.</text>
</comment>
<comment type="catalytic activity">
    <reaction evidence="1">
        <text>UDP-N-acetyl-alpha-D-muramoyl-L-alanyl-gamma-D-glutamyl-meso-2,6-diaminopimeloyl-D-alanyl-D-alanine + di-trans,octa-cis-undecaprenyl phosphate = di-trans,octa-cis-undecaprenyl diphospho-N-acetyl-alpha-D-muramoyl-L-alanyl-D-glutamyl-meso-2,6-diaminopimeloyl-D-alanyl-D-alanine + UMP</text>
        <dbReference type="Rhea" id="RHEA:28386"/>
        <dbReference type="ChEBI" id="CHEBI:57865"/>
        <dbReference type="ChEBI" id="CHEBI:60392"/>
        <dbReference type="ChEBI" id="CHEBI:61386"/>
        <dbReference type="ChEBI" id="CHEBI:61387"/>
        <dbReference type="EC" id="2.7.8.13"/>
    </reaction>
</comment>
<comment type="cofactor">
    <cofactor evidence="1">
        <name>Mg(2+)</name>
        <dbReference type="ChEBI" id="CHEBI:18420"/>
    </cofactor>
</comment>
<comment type="pathway">
    <text evidence="1">Cell wall biogenesis; peptidoglycan biosynthesis.</text>
</comment>
<comment type="subcellular location">
    <subcellularLocation>
        <location evidence="1">Cell inner membrane</location>
        <topology evidence="1">Multi-pass membrane protein</topology>
    </subcellularLocation>
</comment>
<comment type="similarity">
    <text evidence="1">Belongs to the glycosyltransferase 4 family. MraY subfamily.</text>
</comment>
<organism>
    <name type="scientific">Acinetobacter baumannii (strain ACICU)</name>
    <dbReference type="NCBI Taxonomy" id="405416"/>
    <lineage>
        <taxon>Bacteria</taxon>
        <taxon>Pseudomonadati</taxon>
        <taxon>Pseudomonadota</taxon>
        <taxon>Gammaproteobacteria</taxon>
        <taxon>Moraxellales</taxon>
        <taxon>Moraxellaceae</taxon>
        <taxon>Acinetobacter</taxon>
        <taxon>Acinetobacter calcoaceticus/baumannii complex</taxon>
    </lineage>
</organism>
<protein>
    <recommendedName>
        <fullName evidence="1">Phospho-N-acetylmuramoyl-pentapeptide-transferase</fullName>
        <ecNumber evidence="1">2.7.8.13</ecNumber>
    </recommendedName>
    <alternativeName>
        <fullName evidence="1">UDP-MurNAc-pentapeptide phosphotransferase</fullName>
    </alternativeName>
</protein>
<feature type="chain" id="PRO_1000090580" description="Phospho-N-acetylmuramoyl-pentapeptide-transferase">
    <location>
        <begin position="1"/>
        <end position="372"/>
    </location>
</feature>
<feature type="transmembrane region" description="Helical" evidence="1">
    <location>
        <begin position="25"/>
        <end position="45"/>
    </location>
</feature>
<feature type="transmembrane region" description="Helical" evidence="1">
    <location>
        <begin position="73"/>
        <end position="93"/>
    </location>
</feature>
<feature type="transmembrane region" description="Helical" evidence="1">
    <location>
        <begin position="98"/>
        <end position="118"/>
    </location>
</feature>
<feature type="transmembrane region" description="Helical" evidence="1">
    <location>
        <begin position="134"/>
        <end position="154"/>
    </location>
</feature>
<feature type="transmembrane region" description="Helical" evidence="1">
    <location>
        <begin position="176"/>
        <end position="196"/>
    </location>
</feature>
<feature type="transmembrane region" description="Helical" evidence="1">
    <location>
        <begin position="211"/>
        <end position="231"/>
    </location>
</feature>
<feature type="transmembrane region" description="Helical" evidence="1">
    <location>
        <begin position="251"/>
        <end position="271"/>
    </location>
</feature>
<feature type="transmembrane region" description="Helical" evidence="1">
    <location>
        <begin position="275"/>
        <end position="295"/>
    </location>
</feature>
<feature type="transmembrane region" description="Helical" evidence="1">
    <location>
        <begin position="300"/>
        <end position="320"/>
    </location>
</feature>
<feature type="transmembrane region" description="Helical" evidence="1">
    <location>
        <begin position="349"/>
        <end position="369"/>
    </location>
</feature>